<accession>A8SEB4</accession>
<evidence type="ECO:0000255" key="1">
    <source>
        <dbReference type="HAMAP-Rule" id="MF_00437"/>
    </source>
</evidence>
<reference key="1">
    <citation type="journal article" date="2007" name="Proc. Natl. Acad. Sci. U.S.A.">
        <title>Using plastid genome-scale data to resolve enigmatic relationships among basal angiosperms.</title>
        <authorList>
            <person name="Moore M.J."/>
            <person name="Bell C.D."/>
            <person name="Soltis P.S."/>
            <person name="Soltis D.E."/>
        </authorList>
    </citation>
    <scope>NUCLEOTIDE SEQUENCE [LARGE SCALE GENOMIC DNA]</scope>
</reference>
<keyword id="KW-0150">Chloroplast</keyword>
<keyword id="KW-0472">Membrane</keyword>
<keyword id="KW-0602">Photosynthesis</keyword>
<keyword id="KW-0934">Plastid</keyword>
<keyword id="KW-0793">Thylakoid</keyword>
<keyword id="KW-0812">Transmembrane</keyword>
<keyword id="KW-1133">Transmembrane helix</keyword>
<organism>
    <name type="scientific">Ceratophyllum demersum</name>
    <name type="common">Rigid hornwort</name>
    <name type="synonym">Coontail</name>
    <dbReference type="NCBI Taxonomy" id="4428"/>
    <lineage>
        <taxon>Eukaryota</taxon>
        <taxon>Viridiplantae</taxon>
        <taxon>Streptophyta</taxon>
        <taxon>Embryophyta</taxon>
        <taxon>Tracheophyta</taxon>
        <taxon>Spermatophyta</taxon>
        <taxon>Magnoliopsida</taxon>
        <taxon>Ceratophyllales</taxon>
        <taxon>Ceratophyllaceae</taxon>
        <taxon>Ceratophyllum</taxon>
    </lineage>
</organism>
<proteinExistence type="inferred from homology"/>
<protein>
    <recommendedName>
        <fullName evidence="1">Photosystem I assembly protein Ycf4</fullName>
    </recommendedName>
</protein>
<feature type="chain" id="PRO_0000325999" description="Photosystem I assembly protein Ycf4">
    <location>
        <begin position="1"/>
        <end position="184"/>
    </location>
</feature>
<feature type="transmembrane region" description="Helical" evidence="1">
    <location>
        <begin position="22"/>
        <end position="42"/>
    </location>
</feature>
<feature type="transmembrane region" description="Helical" evidence="1">
    <location>
        <begin position="57"/>
        <end position="77"/>
    </location>
</feature>
<comment type="function">
    <text evidence="1">Seems to be required for the assembly of the photosystem I complex.</text>
</comment>
<comment type="subcellular location">
    <subcellularLocation>
        <location evidence="1">Plastid</location>
        <location evidence="1">Chloroplast thylakoid membrane</location>
        <topology evidence="1">Multi-pass membrane protein</topology>
    </subcellularLocation>
</comment>
<comment type="similarity">
    <text evidence="1">Belongs to the Ycf4 family.</text>
</comment>
<gene>
    <name evidence="1" type="primary">ycf4</name>
</gene>
<dbReference type="EMBL" id="EF614270">
    <property type="protein sequence ID" value="ABQ81461.1"/>
    <property type="molecule type" value="Genomic_DNA"/>
</dbReference>
<dbReference type="RefSeq" id="YP_001542458.1">
    <property type="nucleotide sequence ID" value="NC_009962.1"/>
</dbReference>
<dbReference type="GeneID" id="5729480"/>
<dbReference type="GO" id="GO:0009535">
    <property type="term" value="C:chloroplast thylakoid membrane"/>
    <property type="evidence" value="ECO:0007669"/>
    <property type="project" value="UniProtKB-SubCell"/>
</dbReference>
<dbReference type="GO" id="GO:0009522">
    <property type="term" value="C:photosystem I"/>
    <property type="evidence" value="ECO:0007669"/>
    <property type="project" value="InterPro"/>
</dbReference>
<dbReference type="GO" id="GO:0015979">
    <property type="term" value="P:photosynthesis"/>
    <property type="evidence" value="ECO:0007669"/>
    <property type="project" value="UniProtKB-UniRule"/>
</dbReference>
<dbReference type="HAMAP" id="MF_00437">
    <property type="entry name" value="Ycf4"/>
    <property type="match status" value="1"/>
</dbReference>
<dbReference type="InterPro" id="IPR003359">
    <property type="entry name" value="PSI_Ycf4_assembly"/>
</dbReference>
<dbReference type="PANTHER" id="PTHR33288">
    <property type="match status" value="1"/>
</dbReference>
<dbReference type="PANTHER" id="PTHR33288:SF4">
    <property type="entry name" value="PHOTOSYSTEM I ASSEMBLY PROTEIN YCF4"/>
    <property type="match status" value="1"/>
</dbReference>
<dbReference type="Pfam" id="PF02392">
    <property type="entry name" value="Ycf4"/>
    <property type="match status" value="1"/>
</dbReference>
<sequence>MNWRSERIWIEVITGSRKTSNFFWACILFLGSLGFLLVGTSSYLGRNLISLFPSQQIPFFPQGIVMSFYGIAGLFISSYLWCTISWNVGSGYDRFDRKEGIVYIFRWGFPGKNRRIFLRFLMKDIQSIRMEVKEGVYPRPALYMEIRGQGTIPLTRTDENFTSREMEQKAAELAYFLNVPIEVF</sequence>
<name>YCF4_CERDE</name>
<geneLocation type="chloroplast"/>